<comment type="function">
    <text evidence="1">Multifunctional enzyme that catalyzes the SAM-dependent methylations of uroporphyrinogen III at position C-2 and C-7 to form precorrin-2 via precorrin-1. Then it catalyzes the NAD-dependent ring dehydrogenation of precorrin-2 to yield sirohydrochlorin. Finally, it catalyzes the ferrochelation of sirohydrochlorin to yield siroheme.</text>
</comment>
<comment type="catalytic activity">
    <reaction evidence="1">
        <text>uroporphyrinogen III + 2 S-adenosyl-L-methionine = precorrin-2 + 2 S-adenosyl-L-homocysteine + H(+)</text>
        <dbReference type="Rhea" id="RHEA:32459"/>
        <dbReference type="ChEBI" id="CHEBI:15378"/>
        <dbReference type="ChEBI" id="CHEBI:57308"/>
        <dbReference type="ChEBI" id="CHEBI:57856"/>
        <dbReference type="ChEBI" id="CHEBI:58827"/>
        <dbReference type="ChEBI" id="CHEBI:59789"/>
        <dbReference type="EC" id="2.1.1.107"/>
    </reaction>
</comment>
<comment type="catalytic activity">
    <reaction evidence="1">
        <text>precorrin-2 + NAD(+) = sirohydrochlorin + NADH + 2 H(+)</text>
        <dbReference type="Rhea" id="RHEA:15613"/>
        <dbReference type="ChEBI" id="CHEBI:15378"/>
        <dbReference type="ChEBI" id="CHEBI:57540"/>
        <dbReference type="ChEBI" id="CHEBI:57945"/>
        <dbReference type="ChEBI" id="CHEBI:58351"/>
        <dbReference type="ChEBI" id="CHEBI:58827"/>
        <dbReference type="EC" id="1.3.1.76"/>
    </reaction>
</comment>
<comment type="catalytic activity">
    <reaction evidence="1">
        <text>siroheme + 2 H(+) = sirohydrochlorin + Fe(2+)</text>
        <dbReference type="Rhea" id="RHEA:24360"/>
        <dbReference type="ChEBI" id="CHEBI:15378"/>
        <dbReference type="ChEBI" id="CHEBI:29033"/>
        <dbReference type="ChEBI" id="CHEBI:58351"/>
        <dbReference type="ChEBI" id="CHEBI:60052"/>
        <dbReference type="EC" id="4.99.1.4"/>
    </reaction>
</comment>
<comment type="pathway">
    <text evidence="1">Cofactor biosynthesis; adenosylcobalamin biosynthesis; precorrin-2 from uroporphyrinogen III: step 1/1.</text>
</comment>
<comment type="pathway">
    <text evidence="1">Cofactor biosynthesis; adenosylcobalamin biosynthesis; sirohydrochlorin from precorrin-2: step 1/1.</text>
</comment>
<comment type="pathway">
    <text evidence="1">Porphyrin-containing compound metabolism; siroheme biosynthesis; precorrin-2 from uroporphyrinogen III: step 1/1.</text>
</comment>
<comment type="pathway">
    <text evidence="1">Porphyrin-containing compound metabolism; siroheme biosynthesis; siroheme from sirohydrochlorin: step 1/1.</text>
</comment>
<comment type="pathway">
    <text evidence="1">Porphyrin-containing compound metabolism; siroheme biosynthesis; sirohydrochlorin from precorrin-2: step 1/1.</text>
</comment>
<comment type="similarity">
    <text evidence="1">In the N-terminal section; belongs to the precorrin-2 dehydrogenase / sirohydrochlorin ferrochelatase family.</text>
</comment>
<comment type="similarity">
    <text evidence="1">In the C-terminal section; belongs to the precorrin methyltransferase family.</text>
</comment>
<reference key="1">
    <citation type="journal article" date="2009" name="PLoS Genet.">
        <title>Organised genome dynamics in the Escherichia coli species results in highly diverse adaptive paths.</title>
        <authorList>
            <person name="Touchon M."/>
            <person name="Hoede C."/>
            <person name="Tenaillon O."/>
            <person name="Barbe V."/>
            <person name="Baeriswyl S."/>
            <person name="Bidet P."/>
            <person name="Bingen E."/>
            <person name="Bonacorsi S."/>
            <person name="Bouchier C."/>
            <person name="Bouvet O."/>
            <person name="Calteau A."/>
            <person name="Chiapello H."/>
            <person name="Clermont O."/>
            <person name="Cruveiller S."/>
            <person name="Danchin A."/>
            <person name="Diard M."/>
            <person name="Dossat C."/>
            <person name="Karoui M.E."/>
            <person name="Frapy E."/>
            <person name="Garry L."/>
            <person name="Ghigo J.M."/>
            <person name="Gilles A.M."/>
            <person name="Johnson J."/>
            <person name="Le Bouguenec C."/>
            <person name="Lescat M."/>
            <person name="Mangenot S."/>
            <person name="Martinez-Jehanne V."/>
            <person name="Matic I."/>
            <person name="Nassif X."/>
            <person name="Oztas S."/>
            <person name="Petit M.A."/>
            <person name="Pichon C."/>
            <person name="Rouy Z."/>
            <person name="Ruf C.S."/>
            <person name="Schneider D."/>
            <person name="Tourret J."/>
            <person name="Vacherie B."/>
            <person name="Vallenet D."/>
            <person name="Medigue C."/>
            <person name="Rocha E.P.C."/>
            <person name="Denamur E."/>
        </authorList>
    </citation>
    <scope>NUCLEOTIDE SEQUENCE [LARGE SCALE GENOMIC DNA]</scope>
    <source>
        <strain>ATCC 35469 / DSM 13698 / BCRC 15582 / CCUG 18766 / IAM 14443 / JCM 21226 / LMG 7866 / NBRC 102419 / NCTC 12128 / CDC 0568-73</strain>
    </source>
</reference>
<feature type="chain" id="PRO_1000186947" description="Siroheme synthase">
    <location>
        <begin position="1"/>
        <end position="457"/>
    </location>
</feature>
<feature type="region of interest" description="Precorrin-2 dehydrogenase /sirohydrochlorin ferrochelatase" evidence="1">
    <location>
        <begin position="1"/>
        <end position="204"/>
    </location>
</feature>
<feature type="region of interest" description="Uroporphyrinogen-III C-methyltransferase" evidence="1">
    <location>
        <begin position="216"/>
        <end position="457"/>
    </location>
</feature>
<feature type="active site" description="Proton acceptor" evidence="1">
    <location>
        <position position="248"/>
    </location>
</feature>
<feature type="active site" description="Proton donor" evidence="1">
    <location>
        <position position="270"/>
    </location>
</feature>
<feature type="binding site" evidence="1">
    <location>
        <begin position="22"/>
        <end position="23"/>
    </location>
    <ligand>
        <name>NAD(+)</name>
        <dbReference type="ChEBI" id="CHEBI:57540"/>
    </ligand>
</feature>
<feature type="binding site" evidence="1">
    <location>
        <begin position="43"/>
        <end position="44"/>
    </location>
    <ligand>
        <name>NAD(+)</name>
        <dbReference type="ChEBI" id="CHEBI:57540"/>
    </ligand>
</feature>
<feature type="binding site" evidence="1">
    <location>
        <position position="225"/>
    </location>
    <ligand>
        <name>S-adenosyl-L-methionine</name>
        <dbReference type="ChEBI" id="CHEBI:59789"/>
    </ligand>
</feature>
<feature type="binding site" evidence="1">
    <location>
        <begin position="301"/>
        <end position="303"/>
    </location>
    <ligand>
        <name>S-adenosyl-L-methionine</name>
        <dbReference type="ChEBI" id="CHEBI:59789"/>
    </ligand>
</feature>
<feature type="binding site" evidence="1">
    <location>
        <position position="306"/>
    </location>
    <ligand>
        <name>S-adenosyl-L-methionine</name>
        <dbReference type="ChEBI" id="CHEBI:59789"/>
    </ligand>
</feature>
<feature type="binding site" evidence="1">
    <location>
        <begin position="331"/>
        <end position="332"/>
    </location>
    <ligand>
        <name>S-adenosyl-L-methionine</name>
        <dbReference type="ChEBI" id="CHEBI:59789"/>
    </ligand>
</feature>
<feature type="binding site" evidence="1">
    <location>
        <position position="382"/>
    </location>
    <ligand>
        <name>S-adenosyl-L-methionine</name>
        <dbReference type="ChEBI" id="CHEBI:59789"/>
    </ligand>
</feature>
<feature type="binding site" evidence="1">
    <location>
        <position position="411"/>
    </location>
    <ligand>
        <name>S-adenosyl-L-methionine</name>
        <dbReference type="ChEBI" id="CHEBI:59789"/>
    </ligand>
</feature>
<feature type="modified residue" description="Phosphoserine" evidence="1">
    <location>
        <position position="128"/>
    </location>
</feature>
<gene>
    <name evidence="1" type="primary">cysG</name>
    <name type="ordered locus">EFER_3340</name>
</gene>
<keyword id="KW-0169">Cobalamin biosynthesis</keyword>
<keyword id="KW-0456">Lyase</keyword>
<keyword id="KW-0489">Methyltransferase</keyword>
<keyword id="KW-0511">Multifunctional enzyme</keyword>
<keyword id="KW-0520">NAD</keyword>
<keyword id="KW-0560">Oxidoreductase</keyword>
<keyword id="KW-0597">Phosphoprotein</keyword>
<keyword id="KW-0627">Porphyrin biosynthesis</keyword>
<keyword id="KW-0949">S-adenosyl-L-methionine</keyword>
<keyword id="KW-0808">Transferase</keyword>
<accession>B7LS75</accession>
<proteinExistence type="inferred from homology"/>
<protein>
    <recommendedName>
        <fullName evidence="1">Siroheme synthase</fullName>
    </recommendedName>
    <domain>
        <recommendedName>
            <fullName evidence="1">Uroporphyrinogen-III C-methyltransferase</fullName>
            <shortName evidence="1">Urogen III methylase</shortName>
            <ecNumber evidence="1">2.1.1.107</ecNumber>
        </recommendedName>
        <alternativeName>
            <fullName evidence="1">SUMT</fullName>
        </alternativeName>
        <alternativeName>
            <fullName evidence="1">Uroporphyrinogen III methylase</fullName>
            <shortName evidence="1">UROM</shortName>
        </alternativeName>
    </domain>
    <domain>
        <recommendedName>
            <fullName evidence="1">Precorrin-2 dehydrogenase</fullName>
            <ecNumber evidence="1">1.3.1.76</ecNumber>
        </recommendedName>
    </domain>
    <domain>
        <recommendedName>
            <fullName evidence="1">Sirohydrochlorin ferrochelatase</fullName>
            <ecNumber evidence="1">4.99.1.4</ecNumber>
        </recommendedName>
    </domain>
</protein>
<organism>
    <name type="scientific">Escherichia fergusonii (strain ATCC 35469 / DSM 13698 / CCUG 18766 / IAM 14443 / JCM 21226 / LMG 7866 / NBRC 102419 / NCTC 12128 / CDC 0568-73)</name>
    <dbReference type="NCBI Taxonomy" id="585054"/>
    <lineage>
        <taxon>Bacteria</taxon>
        <taxon>Pseudomonadati</taxon>
        <taxon>Pseudomonadota</taxon>
        <taxon>Gammaproteobacteria</taxon>
        <taxon>Enterobacterales</taxon>
        <taxon>Enterobacteriaceae</taxon>
        <taxon>Escherichia</taxon>
    </lineage>
</organism>
<name>CYSG_ESCF3</name>
<sequence length="457" mass="50041">MDHLPIFCQLRDRDCLIVGGGDVAERKARLLLDAGARLTVNALAFIPQFTAWADAGMLTLVEGPFDESLLDTCWLAIAATDDDALNQRVSEAAESRRIFCNVVDAPKAASFIMPSIIDRSPLMVAVSSGGTSPVLARLLREKLESLLPLHLGQVAKYAGQLRGRVKQQFATMGERRRFWEKLFVNDRLAQSLANNDQKAITETTEQLINEPLDHRGEVVLVGAGPGDAGLLTLKGLQQIQQADVVVYDRLVSDDIMNLVRRDADRVFVGKRAGYHCVPQEEINQILLREAQKGKRVVRLKGGDPFIFGRGGEELETLCNADIPFSVVPGITAASGCSAYSGIPLTHRDYAQSVRLITGHLKTGGELDWENLAAEKQTLVFYMGLNQASTIQQKLIEHGMPGEMPVAIVENGTAVTQRVIDGTLTQLGELAQQMNSPSLIIIGRVVGLRDKLNWFSNH</sequence>
<dbReference type="EC" id="2.1.1.107" evidence="1"/>
<dbReference type="EC" id="1.3.1.76" evidence="1"/>
<dbReference type="EC" id="4.99.1.4" evidence="1"/>
<dbReference type="EMBL" id="CU928158">
    <property type="protein sequence ID" value="CAQ90818.1"/>
    <property type="molecule type" value="Genomic_DNA"/>
</dbReference>
<dbReference type="RefSeq" id="WP_000349872.1">
    <property type="nucleotide sequence ID" value="NC_011740.1"/>
</dbReference>
<dbReference type="SMR" id="B7LS75"/>
<dbReference type="GeneID" id="75060052"/>
<dbReference type="KEGG" id="efe:EFER_3340"/>
<dbReference type="HOGENOM" id="CLU_011276_2_0_6"/>
<dbReference type="OrthoDB" id="9815856at2"/>
<dbReference type="UniPathway" id="UPA00148">
    <property type="reaction ID" value="UER00211"/>
</dbReference>
<dbReference type="UniPathway" id="UPA00148">
    <property type="reaction ID" value="UER00222"/>
</dbReference>
<dbReference type="UniPathway" id="UPA00262">
    <property type="reaction ID" value="UER00211"/>
</dbReference>
<dbReference type="UniPathway" id="UPA00262">
    <property type="reaction ID" value="UER00222"/>
</dbReference>
<dbReference type="UniPathway" id="UPA00262">
    <property type="reaction ID" value="UER00376"/>
</dbReference>
<dbReference type="Proteomes" id="UP000000745">
    <property type="component" value="Chromosome"/>
</dbReference>
<dbReference type="GO" id="GO:0051287">
    <property type="term" value="F:NAD binding"/>
    <property type="evidence" value="ECO:0007669"/>
    <property type="project" value="InterPro"/>
</dbReference>
<dbReference type="GO" id="GO:0043115">
    <property type="term" value="F:precorrin-2 dehydrogenase activity"/>
    <property type="evidence" value="ECO:0007669"/>
    <property type="project" value="UniProtKB-UniRule"/>
</dbReference>
<dbReference type="GO" id="GO:0051266">
    <property type="term" value="F:sirohydrochlorin ferrochelatase activity"/>
    <property type="evidence" value="ECO:0007669"/>
    <property type="project" value="UniProtKB-EC"/>
</dbReference>
<dbReference type="GO" id="GO:0004851">
    <property type="term" value="F:uroporphyrin-III C-methyltransferase activity"/>
    <property type="evidence" value="ECO:0007669"/>
    <property type="project" value="UniProtKB-UniRule"/>
</dbReference>
<dbReference type="GO" id="GO:0009236">
    <property type="term" value="P:cobalamin biosynthetic process"/>
    <property type="evidence" value="ECO:0007669"/>
    <property type="project" value="UniProtKB-UniRule"/>
</dbReference>
<dbReference type="GO" id="GO:0032259">
    <property type="term" value="P:methylation"/>
    <property type="evidence" value="ECO:0007669"/>
    <property type="project" value="UniProtKB-KW"/>
</dbReference>
<dbReference type="GO" id="GO:0019354">
    <property type="term" value="P:siroheme biosynthetic process"/>
    <property type="evidence" value="ECO:0007669"/>
    <property type="project" value="UniProtKB-UniRule"/>
</dbReference>
<dbReference type="CDD" id="cd11642">
    <property type="entry name" value="SUMT"/>
    <property type="match status" value="1"/>
</dbReference>
<dbReference type="FunFam" id="1.10.8.210:FF:000001">
    <property type="entry name" value="Siroheme synthase"/>
    <property type="match status" value="1"/>
</dbReference>
<dbReference type="FunFam" id="3.30.160.110:FF:000001">
    <property type="entry name" value="Siroheme synthase"/>
    <property type="match status" value="1"/>
</dbReference>
<dbReference type="FunFam" id="3.30.950.10:FF:000001">
    <property type="entry name" value="Siroheme synthase"/>
    <property type="match status" value="1"/>
</dbReference>
<dbReference type="FunFam" id="3.40.1010.10:FF:000001">
    <property type="entry name" value="Siroheme synthase"/>
    <property type="match status" value="1"/>
</dbReference>
<dbReference type="FunFam" id="3.40.50.720:FF:000092">
    <property type="entry name" value="Siroheme synthase"/>
    <property type="match status" value="1"/>
</dbReference>
<dbReference type="Gene3D" id="3.40.1010.10">
    <property type="entry name" value="Cobalt-precorrin-4 Transmethylase, Domain 1"/>
    <property type="match status" value="1"/>
</dbReference>
<dbReference type="Gene3D" id="3.30.950.10">
    <property type="entry name" value="Methyltransferase, Cobalt-precorrin-4 Transmethylase, Domain 2"/>
    <property type="match status" value="1"/>
</dbReference>
<dbReference type="Gene3D" id="3.40.50.720">
    <property type="entry name" value="NAD(P)-binding Rossmann-like Domain"/>
    <property type="match status" value="1"/>
</dbReference>
<dbReference type="Gene3D" id="1.10.8.210">
    <property type="entry name" value="Sirohaem synthase, dimerisation domain"/>
    <property type="match status" value="1"/>
</dbReference>
<dbReference type="Gene3D" id="3.30.160.110">
    <property type="entry name" value="Siroheme synthase, domain 2"/>
    <property type="match status" value="1"/>
</dbReference>
<dbReference type="HAMAP" id="MF_01646">
    <property type="entry name" value="Siroheme_synth"/>
    <property type="match status" value="1"/>
</dbReference>
<dbReference type="InterPro" id="IPR000878">
    <property type="entry name" value="4pyrrol_Mease"/>
</dbReference>
<dbReference type="InterPro" id="IPR035996">
    <property type="entry name" value="4pyrrol_Methylase_sf"/>
</dbReference>
<dbReference type="InterPro" id="IPR014777">
    <property type="entry name" value="4pyrrole_Mease_sub1"/>
</dbReference>
<dbReference type="InterPro" id="IPR014776">
    <property type="entry name" value="4pyrrole_Mease_sub2"/>
</dbReference>
<dbReference type="InterPro" id="IPR006366">
    <property type="entry name" value="CobA/CysG_C"/>
</dbReference>
<dbReference type="InterPro" id="IPR036291">
    <property type="entry name" value="NAD(P)-bd_dom_sf"/>
</dbReference>
<dbReference type="InterPro" id="IPR050161">
    <property type="entry name" value="Siro_Cobalamin_biosynth"/>
</dbReference>
<dbReference type="InterPro" id="IPR037115">
    <property type="entry name" value="Sirohaem_synt_dimer_dom_sf"/>
</dbReference>
<dbReference type="InterPro" id="IPR012409">
    <property type="entry name" value="Sirohaem_synth"/>
</dbReference>
<dbReference type="InterPro" id="IPR028281">
    <property type="entry name" value="Sirohaem_synthase_central"/>
</dbReference>
<dbReference type="InterPro" id="IPR019478">
    <property type="entry name" value="Sirohaem_synthase_dimer_dom"/>
</dbReference>
<dbReference type="InterPro" id="IPR006367">
    <property type="entry name" value="Sirohaem_synthase_N"/>
</dbReference>
<dbReference type="InterPro" id="IPR003043">
    <property type="entry name" value="Uropor_MeTrfase_CS"/>
</dbReference>
<dbReference type="NCBIfam" id="TIGR01469">
    <property type="entry name" value="cobA_cysG_Cterm"/>
    <property type="match status" value="1"/>
</dbReference>
<dbReference type="NCBIfam" id="TIGR01470">
    <property type="entry name" value="cysG_Nterm"/>
    <property type="match status" value="1"/>
</dbReference>
<dbReference type="NCBIfam" id="NF004790">
    <property type="entry name" value="PRK06136.1"/>
    <property type="match status" value="1"/>
</dbReference>
<dbReference type="NCBIfam" id="NF007922">
    <property type="entry name" value="PRK10637.1"/>
    <property type="match status" value="1"/>
</dbReference>
<dbReference type="PANTHER" id="PTHR45790:SF1">
    <property type="entry name" value="SIROHEME SYNTHASE"/>
    <property type="match status" value="1"/>
</dbReference>
<dbReference type="PANTHER" id="PTHR45790">
    <property type="entry name" value="SIROHEME SYNTHASE-RELATED"/>
    <property type="match status" value="1"/>
</dbReference>
<dbReference type="Pfam" id="PF10414">
    <property type="entry name" value="CysG_dimeriser"/>
    <property type="match status" value="1"/>
</dbReference>
<dbReference type="Pfam" id="PF13241">
    <property type="entry name" value="NAD_binding_7"/>
    <property type="match status" value="1"/>
</dbReference>
<dbReference type="Pfam" id="PF14824">
    <property type="entry name" value="Sirohm_synth_M"/>
    <property type="match status" value="1"/>
</dbReference>
<dbReference type="Pfam" id="PF00590">
    <property type="entry name" value="TP_methylase"/>
    <property type="match status" value="1"/>
</dbReference>
<dbReference type="PIRSF" id="PIRSF036426">
    <property type="entry name" value="Sirohaem_synth"/>
    <property type="match status" value="1"/>
</dbReference>
<dbReference type="SUPFAM" id="SSF51735">
    <property type="entry name" value="NAD(P)-binding Rossmann-fold domains"/>
    <property type="match status" value="1"/>
</dbReference>
<dbReference type="SUPFAM" id="SSF75615">
    <property type="entry name" value="Siroheme synthase middle domains-like"/>
    <property type="match status" value="1"/>
</dbReference>
<dbReference type="SUPFAM" id="SSF53790">
    <property type="entry name" value="Tetrapyrrole methylase"/>
    <property type="match status" value="1"/>
</dbReference>
<dbReference type="PROSITE" id="PS00839">
    <property type="entry name" value="SUMT_1"/>
    <property type="match status" value="1"/>
</dbReference>
<dbReference type="PROSITE" id="PS00840">
    <property type="entry name" value="SUMT_2"/>
    <property type="match status" value="1"/>
</dbReference>
<evidence type="ECO:0000255" key="1">
    <source>
        <dbReference type="HAMAP-Rule" id="MF_01646"/>
    </source>
</evidence>